<feature type="chain" id="PRO_0000085327" description="Virion infectivity factor">
    <location>
        <begin position="1"/>
        <end position="232"/>
    </location>
</feature>
<feature type="region of interest" description="Multimerization" evidence="1">
    <location>
        <begin position="157"/>
        <end position="169"/>
    </location>
</feature>
<feature type="short sequence motif" description="HCCH motif" evidence="1">
    <location>
        <begin position="112"/>
        <end position="142"/>
    </location>
</feature>
<feature type="short sequence motif" description="BC-box-like motif" evidence="1">
    <location>
        <begin position="150"/>
        <end position="159"/>
    </location>
</feature>
<feature type="modified residue" description="Phosphothreonine; by host" evidence="1">
    <location>
        <position position="100"/>
    </location>
</feature>
<feature type="modified residue" description="Phosphoserine; by host" evidence="1">
    <location>
        <position position="150"/>
    </location>
</feature>
<keyword id="KW-1032">Host cell membrane</keyword>
<keyword id="KW-1035">Host cytoplasm</keyword>
<keyword id="KW-1043">Host membrane</keyword>
<keyword id="KW-0945">Host-virus interaction</keyword>
<keyword id="KW-0472">Membrane</keyword>
<keyword id="KW-0597">Phosphoprotein</keyword>
<keyword id="KW-0832">Ubl conjugation</keyword>
<keyword id="KW-0833">Ubl conjugation pathway</keyword>
<keyword id="KW-0946">Virion</keyword>
<protein>
    <recommendedName>
        <fullName>Virion infectivity factor</fullName>
        <shortName>Vif</shortName>
    </recommendedName>
    <alternativeName>
        <fullName>Q protein</fullName>
    </alternativeName>
    <alternativeName>
        <fullName>SOR protein</fullName>
    </alternativeName>
</protein>
<dbReference type="EMBL" id="M30931">
    <property type="protein sequence ID" value="AAA91915.1"/>
    <property type="molecule type" value="Genomic_RNA"/>
</dbReference>
<dbReference type="SMR" id="P27983"/>
<dbReference type="GO" id="GO:0030430">
    <property type="term" value="C:host cell cytoplasm"/>
    <property type="evidence" value="ECO:0007669"/>
    <property type="project" value="UniProtKB-SubCell"/>
</dbReference>
<dbReference type="GO" id="GO:0020002">
    <property type="term" value="C:host cell plasma membrane"/>
    <property type="evidence" value="ECO:0007669"/>
    <property type="project" value="UniProtKB-SubCell"/>
</dbReference>
<dbReference type="GO" id="GO:0016020">
    <property type="term" value="C:membrane"/>
    <property type="evidence" value="ECO:0007669"/>
    <property type="project" value="UniProtKB-KW"/>
</dbReference>
<dbReference type="GO" id="GO:0044423">
    <property type="term" value="C:virion component"/>
    <property type="evidence" value="ECO:0007669"/>
    <property type="project" value="UniProtKB-KW"/>
</dbReference>
<dbReference type="GO" id="GO:0019058">
    <property type="term" value="P:viral life cycle"/>
    <property type="evidence" value="ECO:0007669"/>
    <property type="project" value="InterPro"/>
</dbReference>
<dbReference type="InterPro" id="IPR000475">
    <property type="entry name" value="Vif"/>
</dbReference>
<dbReference type="Pfam" id="PF00559">
    <property type="entry name" value="Vif"/>
    <property type="match status" value="1"/>
</dbReference>
<dbReference type="PRINTS" id="PR00349">
    <property type="entry name" value="VIRIONINFFCT"/>
</dbReference>
<sequence>MNQEKEWVMRVTWKVPEELITKWQGIVRYWMRTRKLDWKYRMHYQITWAWYTMSRYEIPLGQHGSIHVDLYWHLTPEKGWLSTYAEGIQYLSNRDPWYRTELDPATADSLIHTHYFTCFTERAIRKALLGQRFTFCQFPEGHKKTGQVPSLQYLALLAHQNGLRQRSQRSKTGGTRNMGFEQGAVGRMAKRHARRYQSGSQDAFWARAPVPSMELLSGGGRKESHSHARKGL</sequence>
<organism>
    <name type="scientific">Simian immunodeficiency virus agm.vervet (isolate AGM3)</name>
    <name type="common">SIV-agm.ver</name>
    <name type="synonym">Simian immunodeficiency virus African green monkey vervet</name>
    <dbReference type="NCBI Taxonomy" id="11730"/>
    <lineage>
        <taxon>Viruses</taxon>
        <taxon>Riboviria</taxon>
        <taxon>Pararnavirae</taxon>
        <taxon>Artverviricota</taxon>
        <taxon>Revtraviricetes</taxon>
        <taxon>Ortervirales</taxon>
        <taxon>Retroviridae</taxon>
        <taxon>Orthoretrovirinae</taxon>
        <taxon>Lentivirus</taxon>
        <taxon>Simian immunodeficiency virus</taxon>
    </lineage>
</organism>
<comment type="function">
    <text evidence="1">Counteracts the innate antiviral activity of APOBEC3G. Forms a complex with host APOBEC3G thus preventing the entry of this lethally hypermutating enzyme into progeny virions. Functions as an adapter molecule, recruiting APOBEC3G to the ubiquitin-proteasome machinery. Targets APOBEC3G for degradation through the assembly with elongin BC complex, CUL5 and RBX1. Binds viral RNA and affects the stability of viral nucleoprotein core. May play a role in viral morphology (By similarity).</text>
</comment>
<comment type="subunit">
    <text evidence="1">Homomultimer; in vitro and presumably in vivo. Interacts with viral Pr55Gag precursor and host APOBEC3G. The interaction between Vif and APOBEC3G is species-specific, which may play a role in restricting the replication of SIV to their host. Forms an E3 ligase complex by interacting with host CUL5 and elongin BC complex (ELOB and ELOC) (By similarity).</text>
</comment>
<comment type="subcellular location">
    <subcellularLocation>
        <location evidence="1">Host cytoplasm</location>
    </subcellularLocation>
    <subcellularLocation>
        <location evidence="1">Host cell membrane</location>
        <topology evidence="1">Peripheral membrane protein</topology>
        <orientation evidence="1">Cytoplasmic side</orientation>
    </subcellularLocation>
    <subcellularLocation>
        <location evidence="1">Virion</location>
    </subcellularLocation>
    <text evidence="1">Seems to colocalize with intermediate filament vimentin. A fraction is associated with the cytoplasmic side of cellular membranes, presumably via the interaction with Pr55Gag precursor (By similarity).</text>
</comment>
<comment type="induction">
    <text>Expressed late during infection in a Rev-dependent manner.</text>
</comment>
<comment type="domain">
    <text evidence="1">The BC-like-box motif mediates the interaction with elongin BC complex.</text>
</comment>
<comment type="domain">
    <text evidence="1">The HCCH motif (H-x(5)-C-x(18)-C-x(5)-H) mediates the interaction with CUL5.</text>
</comment>
<comment type="PTM">
    <text evidence="1">Processed in virion by the viral protease.</text>
</comment>
<comment type="PTM">
    <text evidence="1">Highly phosphorylated on serine and threonine residues.</text>
</comment>
<comment type="PTM">
    <text evidence="1">Polyubiquitinated and degraded by the proteasome in the presence of APOBEC3G.</text>
</comment>
<comment type="miscellaneous">
    <text>Vif-defective viruses show catastrophic failure in reverse transcription due to APOBEC-induced mutations that initiate a DNA base repair pathway and compromise the structural integrity of the ssDNA. In the absence of Vif, the virion is morphologically abnormal.</text>
</comment>
<comment type="miscellaneous">
    <text>This is an African green monkey isolate.</text>
</comment>
<comment type="similarity">
    <text evidence="2">Belongs to the primate lentivirus group Vif protein family.</text>
</comment>
<gene>
    <name type="primary">vif</name>
</gene>
<proteinExistence type="evidence at transcript level"/>
<accession>P27983</accession>
<reference key="1">
    <citation type="journal article" date="1990" name="Virology">
        <title>Complete nucleotide sequence of a simian immunodeficiency virus from African green monkeys: a novel type of intragroup divergence.</title>
        <authorList>
            <person name="Baier M."/>
            <person name="Garber C."/>
            <person name="Mueller C."/>
            <person name="Cichutek K."/>
            <person name="Kurth R."/>
        </authorList>
    </citation>
    <scope>NUCLEOTIDE SEQUENCE [GENOMIC RNA]</scope>
</reference>
<evidence type="ECO:0000250" key="1"/>
<evidence type="ECO:0000305" key="2"/>
<name>VIF_SIVVG</name>
<organismHost>
    <name type="scientific">Cercopithecidae</name>
    <name type="common">Old World monkeys</name>
    <dbReference type="NCBI Taxonomy" id="9527"/>
</organismHost>